<organism>
    <name type="scientific">Histophilus somni (strain 2336)</name>
    <name type="common">Haemophilus somnus</name>
    <dbReference type="NCBI Taxonomy" id="228400"/>
    <lineage>
        <taxon>Bacteria</taxon>
        <taxon>Pseudomonadati</taxon>
        <taxon>Pseudomonadota</taxon>
        <taxon>Gammaproteobacteria</taxon>
        <taxon>Pasteurellales</taxon>
        <taxon>Pasteurellaceae</taxon>
        <taxon>Histophilus</taxon>
    </lineage>
</organism>
<gene>
    <name evidence="1" type="primary">rpmH</name>
    <name type="ordered locus">HSM_2021</name>
</gene>
<evidence type="ECO:0000255" key="1">
    <source>
        <dbReference type="HAMAP-Rule" id="MF_00391"/>
    </source>
</evidence>
<evidence type="ECO:0000305" key="2"/>
<proteinExistence type="inferred from homology"/>
<feature type="chain" id="PRO_1000080253" description="Large ribosomal subunit protein bL34">
    <location>
        <begin position="1"/>
        <end position="44"/>
    </location>
</feature>
<name>RL34_HISS2</name>
<sequence length="44" mass="5125">MKRTFQPSVLKRNRTHGFRARMATKNGRQVLARRRAKGRKSLSA</sequence>
<protein>
    <recommendedName>
        <fullName evidence="1">Large ribosomal subunit protein bL34</fullName>
    </recommendedName>
    <alternativeName>
        <fullName evidence="2">50S ribosomal protein L34</fullName>
    </alternativeName>
</protein>
<keyword id="KW-0687">Ribonucleoprotein</keyword>
<keyword id="KW-0689">Ribosomal protein</keyword>
<reference key="1">
    <citation type="submission" date="2008-02" db="EMBL/GenBank/DDBJ databases">
        <title>Complete sequence of Haemophilus somnus 2336.</title>
        <authorList>
            <consortium name="US DOE Joint Genome Institute"/>
            <person name="Siddaramappa S."/>
            <person name="Duncan A.J."/>
            <person name="Challacombe J.F."/>
            <person name="Rainey D."/>
            <person name="Gillaspy A.F."/>
            <person name="Carson M."/>
            <person name="Gipson J."/>
            <person name="Gipson M."/>
            <person name="Bruce D."/>
            <person name="Detter J.C."/>
            <person name="Han C.S."/>
            <person name="Land M."/>
            <person name="Tapia R."/>
            <person name="Thompson L.S."/>
            <person name="Orvis J."/>
            <person name="Zaitshik J."/>
            <person name="Barnes G."/>
            <person name="Brettin T.S."/>
            <person name="Dyer D.W."/>
            <person name="Inzana T.J."/>
        </authorList>
    </citation>
    <scope>NUCLEOTIDE SEQUENCE [LARGE SCALE GENOMIC DNA]</scope>
    <source>
        <strain>2336</strain>
    </source>
</reference>
<comment type="similarity">
    <text evidence="1">Belongs to the bacterial ribosomal protein bL34 family.</text>
</comment>
<dbReference type="EMBL" id="CP000947">
    <property type="protein sequence ID" value="ACA31824.1"/>
    <property type="molecule type" value="Genomic_DNA"/>
</dbReference>
<dbReference type="RefSeq" id="WP_007241546.1">
    <property type="nucleotide sequence ID" value="NC_010519.1"/>
</dbReference>
<dbReference type="SMR" id="B0URU6"/>
<dbReference type="STRING" id="228400.HSM_2021"/>
<dbReference type="GeneID" id="31488332"/>
<dbReference type="KEGG" id="hsm:HSM_2021"/>
<dbReference type="HOGENOM" id="CLU_129938_2_0_6"/>
<dbReference type="GO" id="GO:1990904">
    <property type="term" value="C:ribonucleoprotein complex"/>
    <property type="evidence" value="ECO:0007669"/>
    <property type="project" value="UniProtKB-KW"/>
</dbReference>
<dbReference type="GO" id="GO:0005840">
    <property type="term" value="C:ribosome"/>
    <property type="evidence" value="ECO:0007669"/>
    <property type="project" value="UniProtKB-KW"/>
</dbReference>
<dbReference type="GO" id="GO:0003735">
    <property type="term" value="F:structural constituent of ribosome"/>
    <property type="evidence" value="ECO:0007669"/>
    <property type="project" value="InterPro"/>
</dbReference>
<dbReference type="GO" id="GO:0006412">
    <property type="term" value="P:translation"/>
    <property type="evidence" value="ECO:0007669"/>
    <property type="project" value="UniProtKB-UniRule"/>
</dbReference>
<dbReference type="FunFam" id="1.10.287.3980:FF:000001">
    <property type="entry name" value="Mitochondrial ribosomal protein L34"/>
    <property type="match status" value="1"/>
</dbReference>
<dbReference type="Gene3D" id="1.10.287.3980">
    <property type="match status" value="1"/>
</dbReference>
<dbReference type="HAMAP" id="MF_00391">
    <property type="entry name" value="Ribosomal_bL34"/>
    <property type="match status" value="1"/>
</dbReference>
<dbReference type="InterPro" id="IPR000271">
    <property type="entry name" value="Ribosomal_bL34"/>
</dbReference>
<dbReference type="InterPro" id="IPR020939">
    <property type="entry name" value="Ribosomal_bL34_CS"/>
</dbReference>
<dbReference type="NCBIfam" id="TIGR01030">
    <property type="entry name" value="rpmH_bact"/>
    <property type="match status" value="1"/>
</dbReference>
<dbReference type="PANTHER" id="PTHR14503:SF4">
    <property type="entry name" value="LARGE RIBOSOMAL SUBUNIT PROTEIN BL34M"/>
    <property type="match status" value="1"/>
</dbReference>
<dbReference type="PANTHER" id="PTHR14503">
    <property type="entry name" value="MITOCHONDRIAL RIBOSOMAL PROTEIN 34 FAMILY MEMBER"/>
    <property type="match status" value="1"/>
</dbReference>
<dbReference type="Pfam" id="PF00468">
    <property type="entry name" value="Ribosomal_L34"/>
    <property type="match status" value="1"/>
</dbReference>
<dbReference type="PROSITE" id="PS00784">
    <property type="entry name" value="RIBOSOMAL_L34"/>
    <property type="match status" value="1"/>
</dbReference>
<accession>B0URU6</accession>